<sequence length="425" mass="46017">MTRLDSVERAVADIAAGKAVIVIDDEDRENEGDLIFAAEKATPEMVAFMVRYTSGYLCVPLDGAICDRLGLLPMYAVNQDKHGTAYTVTVDARNGIGTGISASDRATTMRLLADPTSVADDFTRPGHVVPLRAKDGGVLRRPGHTEAAVDLARMAGLQPAGAICEIVSQKDEGSMAHTDELRVFADEHGLALITIADLIEWRRKHEKHIERVAEARIPTRHGEFRAIGYTSIYEDVEHVALVRGEIAGPNADGDDVLVRVHSECLTGDVFGSRRCDCGPQLDAALAMVAREGRGVVLYMRGHEGRGIGLMHKLQAYQLQDAGADTVDANLKLGLPADARDYGIGAQILVDLGVRSMRLLTNNPAKRVGLDGYGLHIIERVPLPVRANAENIRYLMTKRDKLGHDLAGLDDFHESVHLPGEFGGAL</sequence>
<dbReference type="EC" id="4.1.99.12" evidence="1"/>
<dbReference type="EC" id="3.5.4.25" evidence="1"/>
<dbReference type="EMBL" id="AM408590">
    <property type="protein sequence ID" value="CAL71463.1"/>
    <property type="molecule type" value="Genomic_DNA"/>
</dbReference>
<dbReference type="RefSeq" id="WP_003407334.1">
    <property type="nucleotide sequence ID" value="NC_008769.1"/>
</dbReference>
<dbReference type="SMR" id="A1KIK4"/>
<dbReference type="KEGG" id="mbb:BCG_1476"/>
<dbReference type="HOGENOM" id="CLU_020273_1_2_11"/>
<dbReference type="UniPathway" id="UPA00275">
    <property type="reaction ID" value="UER00399"/>
</dbReference>
<dbReference type="UniPathway" id="UPA00275">
    <property type="reaction ID" value="UER00400"/>
</dbReference>
<dbReference type="Proteomes" id="UP000001472">
    <property type="component" value="Chromosome"/>
</dbReference>
<dbReference type="GO" id="GO:0005829">
    <property type="term" value="C:cytosol"/>
    <property type="evidence" value="ECO:0007669"/>
    <property type="project" value="TreeGrafter"/>
</dbReference>
<dbReference type="GO" id="GO:0008686">
    <property type="term" value="F:3,4-dihydroxy-2-butanone-4-phosphate synthase activity"/>
    <property type="evidence" value="ECO:0007669"/>
    <property type="project" value="UniProtKB-UniRule"/>
</dbReference>
<dbReference type="GO" id="GO:0005525">
    <property type="term" value="F:GTP binding"/>
    <property type="evidence" value="ECO:0007669"/>
    <property type="project" value="UniProtKB-KW"/>
</dbReference>
<dbReference type="GO" id="GO:0003935">
    <property type="term" value="F:GTP cyclohydrolase II activity"/>
    <property type="evidence" value="ECO:0007669"/>
    <property type="project" value="UniProtKB-UniRule"/>
</dbReference>
<dbReference type="GO" id="GO:0000287">
    <property type="term" value="F:magnesium ion binding"/>
    <property type="evidence" value="ECO:0007669"/>
    <property type="project" value="UniProtKB-UniRule"/>
</dbReference>
<dbReference type="GO" id="GO:0030145">
    <property type="term" value="F:manganese ion binding"/>
    <property type="evidence" value="ECO:0007669"/>
    <property type="project" value="UniProtKB-UniRule"/>
</dbReference>
<dbReference type="GO" id="GO:0008270">
    <property type="term" value="F:zinc ion binding"/>
    <property type="evidence" value="ECO:0007669"/>
    <property type="project" value="UniProtKB-UniRule"/>
</dbReference>
<dbReference type="GO" id="GO:0009231">
    <property type="term" value="P:riboflavin biosynthetic process"/>
    <property type="evidence" value="ECO:0007669"/>
    <property type="project" value="UniProtKB-UniRule"/>
</dbReference>
<dbReference type="CDD" id="cd00641">
    <property type="entry name" value="GTP_cyclohydro2"/>
    <property type="match status" value="1"/>
</dbReference>
<dbReference type="FunFam" id="3.40.50.10990:FF:000001">
    <property type="entry name" value="Riboflavin biosynthesis protein RibBA"/>
    <property type="match status" value="1"/>
</dbReference>
<dbReference type="FunFam" id="3.90.870.10:FF:000001">
    <property type="entry name" value="Riboflavin biosynthesis protein RibBA"/>
    <property type="match status" value="1"/>
</dbReference>
<dbReference type="Gene3D" id="3.90.870.10">
    <property type="entry name" value="DHBP synthase"/>
    <property type="match status" value="1"/>
</dbReference>
<dbReference type="Gene3D" id="3.40.50.10990">
    <property type="entry name" value="GTP cyclohydrolase II"/>
    <property type="match status" value="1"/>
</dbReference>
<dbReference type="HAMAP" id="MF_00179">
    <property type="entry name" value="RibA"/>
    <property type="match status" value="1"/>
</dbReference>
<dbReference type="HAMAP" id="MF_00180">
    <property type="entry name" value="RibB"/>
    <property type="match status" value="1"/>
</dbReference>
<dbReference type="HAMAP" id="MF_01283">
    <property type="entry name" value="RibBA"/>
    <property type="match status" value="1"/>
</dbReference>
<dbReference type="InterPro" id="IPR017945">
    <property type="entry name" value="DHBP_synth_RibB-like_a/b_dom"/>
</dbReference>
<dbReference type="InterPro" id="IPR000422">
    <property type="entry name" value="DHBP_synthase_RibB"/>
</dbReference>
<dbReference type="InterPro" id="IPR032677">
    <property type="entry name" value="GTP_cyclohydro_II"/>
</dbReference>
<dbReference type="InterPro" id="IPR000926">
    <property type="entry name" value="RibA"/>
</dbReference>
<dbReference type="InterPro" id="IPR036144">
    <property type="entry name" value="RibA-like_sf"/>
</dbReference>
<dbReference type="InterPro" id="IPR016299">
    <property type="entry name" value="Riboflavin_synth_RibBA"/>
</dbReference>
<dbReference type="NCBIfam" id="NF001591">
    <property type="entry name" value="PRK00393.1"/>
    <property type="match status" value="1"/>
</dbReference>
<dbReference type="NCBIfam" id="NF006803">
    <property type="entry name" value="PRK09311.1"/>
    <property type="match status" value="1"/>
</dbReference>
<dbReference type="NCBIfam" id="TIGR00505">
    <property type="entry name" value="ribA"/>
    <property type="match status" value="1"/>
</dbReference>
<dbReference type="NCBIfam" id="TIGR00506">
    <property type="entry name" value="ribB"/>
    <property type="match status" value="1"/>
</dbReference>
<dbReference type="PANTHER" id="PTHR21327:SF18">
    <property type="entry name" value="3,4-DIHYDROXY-2-BUTANONE 4-PHOSPHATE SYNTHASE"/>
    <property type="match status" value="1"/>
</dbReference>
<dbReference type="PANTHER" id="PTHR21327">
    <property type="entry name" value="GTP CYCLOHYDROLASE II-RELATED"/>
    <property type="match status" value="1"/>
</dbReference>
<dbReference type="Pfam" id="PF00926">
    <property type="entry name" value="DHBP_synthase"/>
    <property type="match status" value="1"/>
</dbReference>
<dbReference type="Pfam" id="PF00925">
    <property type="entry name" value="GTP_cyclohydro2"/>
    <property type="match status" value="1"/>
</dbReference>
<dbReference type="PIRSF" id="PIRSF001259">
    <property type="entry name" value="RibA"/>
    <property type="match status" value="1"/>
</dbReference>
<dbReference type="SUPFAM" id="SSF142695">
    <property type="entry name" value="RibA-like"/>
    <property type="match status" value="1"/>
</dbReference>
<dbReference type="SUPFAM" id="SSF55821">
    <property type="entry name" value="YrdC/RibB"/>
    <property type="match status" value="1"/>
</dbReference>
<proteinExistence type="inferred from homology"/>
<keyword id="KW-0342">GTP-binding</keyword>
<keyword id="KW-0378">Hydrolase</keyword>
<keyword id="KW-0456">Lyase</keyword>
<keyword id="KW-0460">Magnesium</keyword>
<keyword id="KW-0464">Manganese</keyword>
<keyword id="KW-0479">Metal-binding</keyword>
<keyword id="KW-0511">Multifunctional enzyme</keyword>
<keyword id="KW-0547">Nucleotide-binding</keyword>
<keyword id="KW-0686">Riboflavin biosynthesis</keyword>
<keyword id="KW-0862">Zinc</keyword>
<name>RIBBA_MYCBP</name>
<reference key="1">
    <citation type="journal article" date="2007" name="Proc. Natl. Acad. Sci. U.S.A.">
        <title>Genome plasticity of BCG and impact on vaccine efficacy.</title>
        <authorList>
            <person name="Brosch R."/>
            <person name="Gordon S.V."/>
            <person name="Garnier T."/>
            <person name="Eiglmeier K."/>
            <person name="Frigui W."/>
            <person name="Valenti P."/>
            <person name="Dos Santos S."/>
            <person name="Duthoy S."/>
            <person name="Lacroix C."/>
            <person name="Garcia-Pelayo C."/>
            <person name="Inwald J.K."/>
            <person name="Golby P."/>
            <person name="Garcia J.N."/>
            <person name="Hewinson R.G."/>
            <person name="Behr M.A."/>
            <person name="Quail M.A."/>
            <person name="Churcher C."/>
            <person name="Barrell B.G."/>
            <person name="Parkhill J."/>
            <person name="Cole S.T."/>
        </authorList>
    </citation>
    <scope>NUCLEOTIDE SEQUENCE [LARGE SCALE GENOMIC DNA]</scope>
    <source>
        <strain>BCG / Pasteur 1173P2</strain>
    </source>
</reference>
<comment type="function">
    <text evidence="1">Catalyzes the conversion of D-ribulose 5-phosphate to formate and 3,4-dihydroxy-2-butanone 4-phosphate.</text>
</comment>
<comment type="function">
    <text evidence="1">Catalyzes the conversion of GTP to 2,5-diamino-6-ribosylamino-4(3H)-pyrimidinone 5'-phosphate (DARP), formate and pyrophosphate.</text>
</comment>
<comment type="catalytic activity">
    <reaction evidence="1">
        <text>D-ribulose 5-phosphate = (2S)-2-hydroxy-3-oxobutyl phosphate + formate + H(+)</text>
        <dbReference type="Rhea" id="RHEA:18457"/>
        <dbReference type="ChEBI" id="CHEBI:15378"/>
        <dbReference type="ChEBI" id="CHEBI:15740"/>
        <dbReference type="ChEBI" id="CHEBI:58121"/>
        <dbReference type="ChEBI" id="CHEBI:58830"/>
        <dbReference type="EC" id="4.1.99.12"/>
    </reaction>
</comment>
<comment type="catalytic activity">
    <reaction evidence="1">
        <text>GTP + 4 H2O = 2,5-diamino-6-hydroxy-4-(5-phosphoribosylamino)-pyrimidine + formate + 2 phosphate + 3 H(+)</text>
        <dbReference type="Rhea" id="RHEA:23704"/>
        <dbReference type="ChEBI" id="CHEBI:15377"/>
        <dbReference type="ChEBI" id="CHEBI:15378"/>
        <dbReference type="ChEBI" id="CHEBI:15740"/>
        <dbReference type="ChEBI" id="CHEBI:37565"/>
        <dbReference type="ChEBI" id="CHEBI:43474"/>
        <dbReference type="ChEBI" id="CHEBI:58614"/>
        <dbReference type="EC" id="3.5.4.25"/>
    </reaction>
</comment>
<comment type="cofactor">
    <cofactor evidence="1">
        <name>Mg(2+)</name>
        <dbReference type="ChEBI" id="CHEBI:18420"/>
    </cofactor>
    <cofactor evidence="1">
        <name>Mn(2+)</name>
        <dbReference type="ChEBI" id="CHEBI:29035"/>
    </cofactor>
    <text evidence="1">Binds 2 divalent metal cations per subunit. Magnesium or manganese.</text>
</comment>
<comment type="cofactor">
    <cofactor evidence="1">
        <name>Zn(2+)</name>
        <dbReference type="ChEBI" id="CHEBI:29105"/>
    </cofactor>
    <text evidence="1">Binds 1 zinc ion per subunit.</text>
</comment>
<comment type="pathway">
    <text evidence="1">Cofactor biosynthesis; riboflavin biosynthesis; 2-hydroxy-3-oxobutyl phosphate from D-ribulose 5-phosphate: step 1/1.</text>
</comment>
<comment type="pathway">
    <text evidence="1">Cofactor biosynthesis; riboflavin biosynthesis; 5-amino-6-(D-ribitylamino)uracil from GTP: step 1/4.</text>
</comment>
<comment type="similarity">
    <text evidence="1">In the N-terminal section; belongs to the DHBP synthase family.</text>
</comment>
<comment type="similarity">
    <text evidence="1">In the C-terminal section; belongs to the GTP cyclohydrolase II family.</text>
</comment>
<gene>
    <name evidence="1" type="primary">ribBA</name>
    <name type="ordered locus">BCG_1476</name>
</gene>
<feature type="chain" id="PRO_1000067424" description="Riboflavin biosynthesis protein RibBA">
    <location>
        <begin position="1"/>
        <end position="425"/>
    </location>
</feature>
<feature type="region of interest" description="DHBP synthase">
    <location>
        <begin position="1"/>
        <end position="204"/>
    </location>
</feature>
<feature type="region of interest" description="GTP cyclohydrolase II">
    <location>
        <begin position="205"/>
        <end position="425"/>
    </location>
</feature>
<feature type="active site" description="Proton acceptor; for GTP cyclohydrolase activity" evidence="1">
    <location>
        <position position="337"/>
    </location>
</feature>
<feature type="active site" description="Nucleophile; for GTP cyclohydrolase activity" evidence="1">
    <location>
        <position position="339"/>
    </location>
</feature>
<feature type="binding site" evidence="1">
    <location>
        <begin position="28"/>
        <end position="29"/>
    </location>
    <ligand>
        <name>D-ribulose 5-phosphate</name>
        <dbReference type="ChEBI" id="CHEBI:58121"/>
    </ligand>
</feature>
<feature type="binding site" evidence="1">
    <location>
        <position position="29"/>
    </location>
    <ligand>
        <name>Mg(2+)</name>
        <dbReference type="ChEBI" id="CHEBI:18420"/>
        <label>1</label>
    </ligand>
</feature>
<feature type="binding site" evidence="1">
    <location>
        <position position="29"/>
    </location>
    <ligand>
        <name>Mg(2+)</name>
        <dbReference type="ChEBI" id="CHEBI:18420"/>
        <label>2</label>
    </ligand>
</feature>
<feature type="binding site" evidence="1">
    <location>
        <position position="33"/>
    </location>
    <ligand>
        <name>D-ribulose 5-phosphate</name>
        <dbReference type="ChEBI" id="CHEBI:58121"/>
    </ligand>
</feature>
<feature type="binding site" evidence="1">
    <location>
        <begin position="141"/>
        <end position="145"/>
    </location>
    <ligand>
        <name>D-ribulose 5-phosphate</name>
        <dbReference type="ChEBI" id="CHEBI:58121"/>
    </ligand>
</feature>
<feature type="binding site" evidence="1">
    <location>
        <position position="144"/>
    </location>
    <ligand>
        <name>Mg(2+)</name>
        <dbReference type="ChEBI" id="CHEBI:18420"/>
        <label>2</label>
    </ligand>
</feature>
<feature type="binding site" evidence="1">
    <location>
        <position position="165"/>
    </location>
    <ligand>
        <name>D-ribulose 5-phosphate</name>
        <dbReference type="ChEBI" id="CHEBI:58121"/>
    </ligand>
</feature>
<feature type="binding site" evidence="1">
    <location>
        <begin position="259"/>
        <end position="263"/>
    </location>
    <ligand>
        <name>GTP</name>
        <dbReference type="ChEBI" id="CHEBI:37565"/>
    </ligand>
</feature>
<feature type="binding site" evidence="1">
    <location>
        <position position="264"/>
    </location>
    <ligand>
        <name>Zn(2+)</name>
        <dbReference type="ChEBI" id="CHEBI:29105"/>
        <note>catalytic</note>
    </ligand>
</feature>
<feature type="binding site" evidence="1">
    <location>
        <position position="275"/>
    </location>
    <ligand>
        <name>Zn(2+)</name>
        <dbReference type="ChEBI" id="CHEBI:29105"/>
        <note>catalytic</note>
    </ligand>
</feature>
<feature type="binding site" evidence="1">
    <location>
        <position position="277"/>
    </location>
    <ligand>
        <name>Zn(2+)</name>
        <dbReference type="ChEBI" id="CHEBI:29105"/>
        <note>catalytic</note>
    </ligand>
</feature>
<feature type="binding site" evidence="1">
    <location>
        <position position="280"/>
    </location>
    <ligand>
        <name>GTP</name>
        <dbReference type="ChEBI" id="CHEBI:37565"/>
    </ligand>
</feature>
<feature type="binding site" evidence="1">
    <location>
        <begin position="303"/>
        <end position="305"/>
    </location>
    <ligand>
        <name>GTP</name>
        <dbReference type="ChEBI" id="CHEBI:37565"/>
    </ligand>
</feature>
<feature type="binding site" evidence="1">
    <location>
        <position position="325"/>
    </location>
    <ligand>
        <name>GTP</name>
        <dbReference type="ChEBI" id="CHEBI:37565"/>
    </ligand>
</feature>
<feature type="binding site" evidence="1">
    <location>
        <position position="360"/>
    </location>
    <ligand>
        <name>GTP</name>
        <dbReference type="ChEBI" id="CHEBI:37565"/>
    </ligand>
</feature>
<feature type="binding site" evidence="1">
    <location>
        <position position="365"/>
    </location>
    <ligand>
        <name>GTP</name>
        <dbReference type="ChEBI" id="CHEBI:37565"/>
    </ligand>
</feature>
<feature type="site" description="Essential for DHBP synthase activity" evidence="1">
    <location>
        <position position="127"/>
    </location>
</feature>
<feature type="site" description="Essential for DHBP synthase activity" evidence="1">
    <location>
        <position position="165"/>
    </location>
</feature>
<accession>A1KIK4</accession>
<evidence type="ECO:0000255" key="1">
    <source>
        <dbReference type="HAMAP-Rule" id="MF_01283"/>
    </source>
</evidence>
<organism>
    <name type="scientific">Mycobacterium bovis (strain BCG / Pasteur 1173P2)</name>
    <dbReference type="NCBI Taxonomy" id="410289"/>
    <lineage>
        <taxon>Bacteria</taxon>
        <taxon>Bacillati</taxon>
        <taxon>Actinomycetota</taxon>
        <taxon>Actinomycetes</taxon>
        <taxon>Mycobacteriales</taxon>
        <taxon>Mycobacteriaceae</taxon>
        <taxon>Mycobacterium</taxon>
        <taxon>Mycobacterium tuberculosis complex</taxon>
    </lineage>
</organism>
<protein>
    <recommendedName>
        <fullName evidence="1">Riboflavin biosynthesis protein RibBA</fullName>
    </recommendedName>
    <domain>
        <recommendedName>
            <fullName evidence="1">3,4-dihydroxy-2-butanone 4-phosphate synthase</fullName>
            <shortName evidence="1">DHBP synthase</shortName>
            <ecNumber evidence="1">4.1.99.12</ecNumber>
        </recommendedName>
    </domain>
    <domain>
        <recommendedName>
            <fullName evidence="1">GTP cyclohydrolase-2</fullName>
            <ecNumber evidence="1">3.5.4.25</ecNumber>
        </recommendedName>
        <alternativeName>
            <fullName evidence="1">GTP cyclohydrolase II</fullName>
        </alternativeName>
    </domain>
</protein>